<name>ARGB_GLUDA</name>
<reference key="1">
    <citation type="journal article" date="2009" name="BMC Genomics">
        <title>Complete genome sequence of the sugarcane nitrogen-fixing endophyte Gluconacetobacter diazotrophicus Pal5.</title>
        <authorList>
            <person name="Bertalan M."/>
            <person name="Albano R."/>
            <person name="de Padua V."/>
            <person name="Rouws L."/>
            <person name="Rojas C."/>
            <person name="Hemerly A."/>
            <person name="Teixeira K."/>
            <person name="Schwab S."/>
            <person name="Araujo J."/>
            <person name="Oliveira A."/>
            <person name="Franca L."/>
            <person name="Magalhaes V."/>
            <person name="Alqueres S."/>
            <person name="Cardoso A."/>
            <person name="Almeida W."/>
            <person name="Loureiro M.M."/>
            <person name="Nogueira E."/>
            <person name="Cidade D."/>
            <person name="Oliveira D."/>
            <person name="Simao T."/>
            <person name="Macedo J."/>
            <person name="Valadao A."/>
            <person name="Dreschsel M."/>
            <person name="Freitas F."/>
            <person name="Vidal M."/>
            <person name="Guedes H."/>
            <person name="Rodrigues E."/>
            <person name="Meneses C."/>
            <person name="Brioso P."/>
            <person name="Pozzer L."/>
            <person name="Figueiredo D."/>
            <person name="Montano H."/>
            <person name="Junior J."/>
            <person name="de Souza Filho G."/>
            <person name="Martin Quintana Flores V."/>
            <person name="Ferreira B."/>
            <person name="Branco A."/>
            <person name="Gonzalez P."/>
            <person name="Guillobel H."/>
            <person name="Lemos M."/>
            <person name="Seibel L."/>
            <person name="Macedo J."/>
            <person name="Alves-Ferreira M."/>
            <person name="Sachetto-Martins G."/>
            <person name="Coelho A."/>
            <person name="Santos E."/>
            <person name="Amaral G."/>
            <person name="Neves A."/>
            <person name="Pacheco A.B."/>
            <person name="Carvalho D."/>
            <person name="Lery L."/>
            <person name="Bisch P."/>
            <person name="Rossle S.C."/>
            <person name="Urmenyi T."/>
            <person name="Rael Pereira A."/>
            <person name="Silva R."/>
            <person name="Rondinelli E."/>
            <person name="von Kruger W."/>
            <person name="Martins O."/>
            <person name="Baldani J.I."/>
            <person name="Ferreira P.C."/>
        </authorList>
    </citation>
    <scope>NUCLEOTIDE SEQUENCE [LARGE SCALE GENOMIC DNA]</scope>
    <source>
        <strain>ATCC 49037 / DSM 5601 / CCUG 37298 / CIP 103539 / LMG 7603 / PAl5</strain>
    </source>
</reference>
<reference key="2">
    <citation type="journal article" date="2010" name="Stand. Genomic Sci.">
        <title>Two genome sequences of the same bacterial strain, Gluconacetobacter diazotrophicus PAl 5, suggest a new standard in genome sequence submission.</title>
        <authorList>
            <person name="Giongo A."/>
            <person name="Tyler H.L."/>
            <person name="Zipperer U.N."/>
            <person name="Triplett E.W."/>
        </authorList>
    </citation>
    <scope>NUCLEOTIDE SEQUENCE [LARGE SCALE GENOMIC DNA]</scope>
    <source>
        <strain>ATCC 49037 / DSM 5601 / CCUG 37298 / CIP 103539 / LMG 7603 / PAl5</strain>
    </source>
</reference>
<feature type="chain" id="PRO_0000335634" description="Acetylglutamate kinase">
    <location>
        <begin position="1"/>
        <end position="313"/>
    </location>
</feature>
<feature type="binding site" evidence="1">
    <location>
        <begin position="84"/>
        <end position="85"/>
    </location>
    <ligand>
        <name>substrate</name>
    </ligand>
</feature>
<feature type="binding site" evidence="1">
    <location>
        <position position="106"/>
    </location>
    <ligand>
        <name>substrate</name>
    </ligand>
</feature>
<feature type="binding site" evidence="1">
    <location>
        <position position="210"/>
    </location>
    <ligand>
        <name>substrate</name>
    </ligand>
</feature>
<feature type="site" description="Transition state stabilizer" evidence="1">
    <location>
        <position position="49"/>
    </location>
</feature>
<feature type="site" description="Transition state stabilizer" evidence="1">
    <location>
        <position position="270"/>
    </location>
</feature>
<keyword id="KW-0028">Amino-acid biosynthesis</keyword>
<keyword id="KW-0055">Arginine biosynthesis</keyword>
<keyword id="KW-0067">ATP-binding</keyword>
<keyword id="KW-0963">Cytoplasm</keyword>
<keyword id="KW-0418">Kinase</keyword>
<keyword id="KW-0547">Nucleotide-binding</keyword>
<keyword id="KW-1185">Reference proteome</keyword>
<keyword id="KW-0808">Transferase</keyword>
<organism>
    <name type="scientific">Gluconacetobacter diazotrophicus (strain ATCC 49037 / DSM 5601 / CCUG 37298 / CIP 103539 / LMG 7603 / PAl5)</name>
    <dbReference type="NCBI Taxonomy" id="272568"/>
    <lineage>
        <taxon>Bacteria</taxon>
        <taxon>Pseudomonadati</taxon>
        <taxon>Pseudomonadota</taxon>
        <taxon>Alphaproteobacteria</taxon>
        <taxon>Acetobacterales</taxon>
        <taxon>Acetobacteraceae</taxon>
        <taxon>Gluconacetobacter</taxon>
    </lineage>
</organism>
<gene>
    <name evidence="1" type="primary">argB</name>
    <name type="ordered locus">GDI2133</name>
    <name type="ordered locus">Gdia_0352</name>
</gene>
<comment type="function">
    <text evidence="1">Catalyzes the ATP-dependent phosphorylation of N-acetyl-L-glutamate.</text>
</comment>
<comment type="catalytic activity">
    <reaction evidence="1">
        <text>N-acetyl-L-glutamate + ATP = N-acetyl-L-glutamyl 5-phosphate + ADP</text>
        <dbReference type="Rhea" id="RHEA:14629"/>
        <dbReference type="ChEBI" id="CHEBI:30616"/>
        <dbReference type="ChEBI" id="CHEBI:44337"/>
        <dbReference type="ChEBI" id="CHEBI:57936"/>
        <dbReference type="ChEBI" id="CHEBI:456216"/>
        <dbReference type="EC" id="2.7.2.8"/>
    </reaction>
</comment>
<comment type="pathway">
    <text evidence="1">Amino-acid biosynthesis; L-arginine biosynthesis; N(2)-acetyl-L-ornithine from L-glutamate: step 2/4.</text>
</comment>
<comment type="subcellular location">
    <subcellularLocation>
        <location evidence="1">Cytoplasm</location>
    </subcellularLocation>
</comment>
<comment type="similarity">
    <text evidence="1">Belongs to the acetylglutamate kinase family. ArgB subfamily.</text>
</comment>
<comment type="sequence caution" evidence="2">
    <conflict type="erroneous initiation">
        <sequence resource="EMBL-CDS" id="CAP56076"/>
    </conflict>
</comment>
<proteinExistence type="inferred from homology"/>
<evidence type="ECO:0000255" key="1">
    <source>
        <dbReference type="HAMAP-Rule" id="MF_00082"/>
    </source>
</evidence>
<evidence type="ECO:0000305" key="2"/>
<dbReference type="EC" id="2.7.2.8" evidence="1"/>
<dbReference type="EMBL" id="AM889285">
    <property type="protein sequence ID" value="CAP56076.1"/>
    <property type="status" value="ALT_INIT"/>
    <property type="molecule type" value="Genomic_DNA"/>
</dbReference>
<dbReference type="EMBL" id="CP001189">
    <property type="protein sequence ID" value="ACI50148.1"/>
    <property type="molecule type" value="Genomic_DNA"/>
</dbReference>
<dbReference type="SMR" id="A9HKR8"/>
<dbReference type="STRING" id="272568.GDI2133"/>
<dbReference type="KEGG" id="gdi:GDI2133"/>
<dbReference type="KEGG" id="gdj:Gdia_0352"/>
<dbReference type="eggNOG" id="COG0548">
    <property type="taxonomic scope" value="Bacteria"/>
</dbReference>
<dbReference type="HOGENOM" id="CLU_053680_0_1_5"/>
<dbReference type="UniPathway" id="UPA00068">
    <property type="reaction ID" value="UER00107"/>
</dbReference>
<dbReference type="Proteomes" id="UP000001176">
    <property type="component" value="Chromosome"/>
</dbReference>
<dbReference type="GO" id="GO:0005737">
    <property type="term" value="C:cytoplasm"/>
    <property type="evidence" value="ECO:0007669"/>
    <property type="project" value="UniProtKB-SubCell"/>
</dbReference>
<dbReference type="GO" id="GO:0003991">
    <property type="term" value="F:acetylglutamate kinase activity"/>
    <property type="evidence" value="ECO:0007669"/>
    <property type="project" value="UniProtKB-UniRule"/>
</dbReference>
<dbReference type="GO" id="GO:0005524">
    <property type="term" value="F:ATP binding"/>
    <property type="evidence" value="ECO:0007669"/>
    <property type="project" value="UniProtKB-UniRule"/>
</dbReference>
<dbReference type="GO" id="GO:0042450">
    <property type="term" value="P:arginine biosynthetic process via ornithine"/>
    <property type="evidence" value="ECO:0007669"/>
    <property type="project" value="UniProtKB-UniRule"/>
</dbReference>
<dbReference type="GO" id="GO:0006526">
    <property type="term" value="P:L-arginine biosynthetic process"/>
    <property type="evidence" value="ECO:0007669"/>
    <property type="project" value="UniProtKB-UniPathway"/>
</dbReference>
<dbReference type="CDD" id="cd04250">
    <property type="entry name" value="AAK_NAGK-C"/>
    <property type="match status" value="1"/>
</dbReference>
<dbReference type="FunFam" id="3.40.1160.10:FF:000004">
    <property type="entry name" value="Acetylglutamate kinase"/>
    <property type="match status" value="1"/>
</dbReference>
<dbReference type="Gene3D" id="3.40.1160.10">
    <property type="entry name" value="Acetylglutamate kinase-like"/>
    <property type="match status" value="1"/>
</dbReference>
<dbReference type="HAMAP" id="MF_00082">
    <property type="entry name" value="ArgB"/>
    <property type="match status" value="1"/>
</dbReference>
<dbReference type="InterPro" id="IPR036393">
    <property type="entry name" value="AceGlu_kinase-like_sf"/>
</dbReference>
<dbReference type="InterPro" id="IPR004662">
    <property type="entry name" value="AcgluKinase_fam"/>
</dbReference>
<dbReference type="InterPro" id="IPR037528">
    <property type="entry name" value="ArgB"/>
</dbReference>
<dbReference type="InterPro" id="IPR001048">
    <property type="entry name" value="Asp/Glu/Uridylate_kinase"/>
</dbReference>
<dbReference type="InterPro" id="IPR001057">
    <property type="entry name" value="Glu/AcGlu_kinase"/>
</dbReference>
<dbReference type="InterPro" id="IPR041727">
    <property type="entry name" value="NAGK-C"/>
</dbReference>
<dbReference type="NCBIfam" id="TIGR00761">
    <property type="entry name" value="argB"/>
    <property type="match status" value="1"/>
</dbReference>
<dbReference type="PANTHER" id="PTHR23342">
    <property type="entry name" value="N-ACETYLGLUTAMATE SYNTHASE"/>
    <property type="match status" value="1"/>
</dbReference>
<dbReference type="PANTHER" id="PTHR23342:SF0">
    <property type="entry name" value="N-ACETYLGLUTAMATE SYNTHASE, MITOCHONDRIAL"/>
    <property type="match status" value="1"/>
</dbReference>
<dbReference type="Pfam" id="PF00696">
    <property type="entry name" value="AA_kinase"/>
    <property type="match status" value="1"/>
</dbReference>
<dbReference type="PIRSF" id="PIRSF000728">
    <property type="entry name" value="NAGK"/>
    <property type="match status" value="1"/>
</dbReference>
<dbReference type="PRINTS" id="PR00474">
    <property type="entry name" value="GLU5KINASE"/>
</dbReference>
<dbReference type="SUPFAM" id="SSF53633">
    <property type="entry name" value="Carbamate kinase-like"/>
    <property type="match status" value="1"/>
</dbReference>
<sequence>MSESQSEFPGGGTTGDIVRTMQEAQERAAVLAQALPFLRRYAGDTIVVKYGGHAMVDDSLSNAFGHDIALLKLVGVNPVIVHGGGPQISAMLTRLQIPSTFVDGLRVTDAAMVDVIEMVLAGKVNKQVAGLINQAGALAVGISGKDGGLITARRLQRTTRDASGQERALDLGFVGEPTHIDPRVLYALSGSGLIPVVAPVGIGEAGETYNINADTAAGAIAGAVHATRLLMLTDVPGVLDETGALIPELTAEEARRGIASGMISGGMIPKVETCLEAVRSGARAAVILDGRVPHACLLELFTEAGPGTLIRGE</sequence>
<accession>A9HKR8</accession>
<accession>B5ZLL9</accession>
<protein>
    <recommendedName>
        <fullName evidence="1">Acetylglutamate kinase</fullName>
        <ecNumber evidence="1">2.7.2.8</ecNumber>
    </recommendedName>
    <alternativeName>
        <fullName evidence="1">N-acetyl-L-glutamate 5-phosphotransferase</fullName>
    </alternativeName>
    <alternativeName>
        <fullName evidence="1">NAG kinase</fullName>
        <shortName evidence="1">NAGK</shortName>
    </alternativeName>
</protein>